<proteinExistence type="evidence at transcript level"/>
<comment type="function">
    <text evidence="3">Putative taste receptor which may play a role in the perception of bitterness.</text>
</comment>
<comment type="subcellular location">
    <subcellularLocation>
        <location evidence="3">Membrane</location>
        <topology evidence="3">Multi-pass membrane protein</topology>
    </subcellularLocation>
</comment>
<comment type="miscellaneous">
    <text evidence="3">Several bitter taste receptors with distinct ligand specificities are expressed in a single taste receptor cell.</text>
</comment>
<comment type="similarity">
    <text evidence="2">Belongs to the G-protein coupled receptor T2R family.</text>
</comment>
<protein>
    <recommendedName>
        <fullName>Taste receptor type 2 member 107</fullName>
        <shortName>T2R107</shortName>
    </recommendedName>
    <alternativeName>
        <fullName>Taste receptor type 2 member 4</fullName>
        <shortName>T2R4</shortName>
    </alternativeName>
</protein>
<accession>Q9JKT9</accession>
<organism>
    <name type="scientific">Rattus norvegicus</name>
    <name type="common">Rat</name>
    <dbReference type="NCBI Taxonomy" id="10116"/>
    <lineage>
        <taxon>Eukaryota</taxon>
        <taxon>Metazoa</taxon>
        <taxon>Chordata</taxon>
        <taxon>Craniata</taxon>
        <taxon>Vertebrata</taxon>
        <taxon>Euteleostomi</taxon>
        <taxon>Mammalia</taxon>
        <taxon>Eutheria</taxon>
        <taxon>Euarchontoglires</taxon>
        <taxon>Glires</taxon>
        <taxon>Rodentia</taxon>
        <taxon>Myomorpha</taxon>
        <taxon>Muroidea</taxon>
        <taxon>Muridae</taxon>
        <taxon>Murinae</taxon>
        <taxon>Rattus</taxon>
    </lineage>
</organism>
<reference evidence="4" key="1">
    <citation type="journal article" date="2000" name="Cell">
        <title>A novel family of mammalian taste receptors.</title>
        <authorList>
            <person name="Adler E."/>
            <person name="Hoon M.A."/>
            <person name="Mueller K.L."/>
            <person name="Chandrashekar J."/>
            <person name="Ryba N.J.P."/>
            <person name="Zuker C.S."/>
        </authorList>
    </citation>
    <scope>NUCLEOTIDE SEQUENCE [GENOMIC DNA]</scope>
</reference>
<sequence>MLSAAEGILLCVVTSEAVLGVLGDTFIALANCMEYAKNKKLSKIGFILIGLAISRIGVVWIIILQGYMQVFFPHILTFGNITEYITYIWVFLNHLSVWFATNLNILYFLKIANFSNSVFLWLKSRVRVVFIFLSGCLLTSWLLCFPQFSKMLNNSKMYWGNTSWLQQQKNVFLINQSLTNLGIFFFIIVSLITCFLLIVFLWRHIRQMHSDGSGLRDLNTEAHVKAMRVLISFAVLFILHFVGLSIQVLCFFLPQNNLLFITGLIATCLYPCGHSIILILGNKQLKQASLKALQHLTCCETKRNLSVT</sequence>
<name>TR107_RAT</name>
<evidence type="ECO:0000250" key="1">
    <source>
        <dbReference type="UniProtKB" id="Q7M725"/>
    </source>
</evidence>
<evidence type="ECO:0000255" key="2"/>
<evidence type="ECO:0000305" key="3"/>
<evidence type="ECO:0000312" key="4">
    <source>
        <dbReference type="EMBL" id="AAF43915.1"/>
    </source>
</evidence>
<evidence type="ECO:0000312" key="5">
    <source>
        <dbReference type="RGD" id="620736"/>
    </source>
</evidence>
<gene>
    <name evidence="1" type="primary">Tas2r107</name>
    <name evidence="5" type="synonym">Tas2r10</name>
    <name type="synonym">Tas2r4</name>
</gene>
<keyword id="KW-0297">G-protein coupled receptor</keyword>
<keyword id="KW-0325">Glycoprotein</keyword>
<keyword id="KW-0472">Membrane</keyword>
<keyword id="KW-0675">Receptor</keyword>
<keyword id="KW-1185">Reference proteome</keyword>
<keyword id="KW-0716">Sensory transduction</keyword>
<keyword id="KW-0919">Taste</keyword>
<keyword id="KW-0807">Transducer</keyword>
<keyword id="KW-0812">Transmembrane</keyword>
<keyword id="KW-1133">Transmembrane helix</keyword>
<dbReference type="EMBL" id="AF227142">
    <property type="protein sequence ID" value="AAF43915.1"/>
    <property type="molecule type" value="mRNA"/>
</dbReference>
<dbReference type="RefSeq" id="NP_076485.1">
    <property type="nucleotide sequence ID" value="NM_023995.1"/>
</dbReference>
<dbReference type="SMR" id="Q9JKT9"/>
<dbReference type="FunCoup" id="Q9JKT9">
    <property type="interactions" value="90"/>
</dbReference>
<dbReference type="STRING" id="10116.ENSRNOP00000007453"/>
<dbReference type="GlyCosmos" id="Q9JKT9">
    <property type="glycosylation" value="4 sites, No reported glycans"/>
</dbReference>
<dbReference type="GlyGen" id="Q9JKT9">
    <property type="glycosylation" value="4 sites"/>
</dbReference>
<dbReference type="PhosphoSitePlus" id="Q9JKT9"/>
<dbReference type="PaxDb" id="10116-ENSRNOP00000007453"/>
<dbReference type="GeneID" id="78981"/>
<dbReference type="KEGG" id="rno:78981"/>
<dbReference type="UCSC" id="RGD:620736">
    <property type="organism name" value="rat"/>
</dbReference>
<dbReference type="AGR" id="RGD:620736"/>
<dbReference type="CTD" id="387342"/>
<dbReference type="RGD" id="620736">
    <property type="gene designation" value="Tas2r107"/>
</dbReference>
<dbReference type="eggNOG" id="ENOG502T3AX">
    <property type="taxonomic scope" value="Eukaryota"/>
</dbReference>
<dbReference type="InParanoid" id="Q9JKT9"/>
<dbReference type="OrthoDB" id="8876749at2759"/>
<dbReference type="PhylomeDB" id="Q9JKT9"/>
<dbReference type="PRO" id="PR:Q9JKT9"/>
<dbReference type="Proteomes" id="UP000002494">
    <property type="component" value="Unplaced"/>
</dbReference>
<dbReference type="GO" id="GO:0016020">
    <property type="term" value="C:membrane"/>
    <property type="evidence" value="ECO:0000318"/>
    <property type="project" value="GO_Central"/>
</dbReference>
<dbReference type="GO" id="GO:0033038">
    <property type="term" value="F:bitter taste receptor activity"/>
    <property type="evidence" value="ECO:0007669"/>
    <property type="project" value="InterPro"/>
</dbReference>
<dbReference type="GO" id="GO:0004930">
    <property type="term" value="F:G protein-coupled receptor activity"/>
    <property type="evidence" value="ECO:0007669"/>
    <property type="project" value="UniProtKB-KW"/>
</dbReference>
<dbReference type="GO" id="GO:0008527">
    <property type="term" value="F:taste receptor activity"/>
    <property type="evidence" value="ECO:0000304"/>
    <property type="project" value="UniProtKB"/>
</dbReference>
<dbReference type="CDD" id="cd15021">
    <property type="entry name" value="7tm_TAS2R10"/>
    <property type="match status" value="1"/>
</dbReference>
<dbReference type="FunFam" id="1.20.1070.10:FF:000042">
    <property type="entry name" value="Taste receptor type 2 member 7"/>
    <property type="match status" value="1"/>
</dbReference>
<dbReference type="Gene3D" id="1.20.1070.10">
    <property type="entry name" value="Rhodopsin 7-helix transmembrane proteins"/>
    <property type="match status" value="1"/>
</dbReference>
<dbReference type="InterPro" id="IPR007960">
    <property type="entry name" value="TAS2R"/>
</dbReference>
<dbReference type="PANTHER" id="PTHR11394">
    <property type="entry name" value="TASTE RECEPTOR TYPE 2"/>
    <property type="match status" value="1"/>
</dbReference>
<dbReference type="PANTHER" id="PTHR11394:SF63">
    <property type="entry name" value="TASTE RECEPTOR TYPE 2 MEMBER 10"/>
    <property type="match status" value="1"/>
</dbReference>
<dbReference type="Pfam" id="PF05296">
    <property type="entry name" value="TAS2R"/>
    <property type="match status" value="1"/>
</dbReference>
<dbReference type="SUPFAM" id="SSF81321">
    <property type="entry name" value="Family A G protein-coupled receptor-like"/>
    <property type="match status" value="1"/>
</dbReference>
<feature type="chain" id="PRO_0000248253" description="Taste receptor type 2 member 107">
    <location>
        <begin position="1"/>
        <end position="308"/>
    </location>
</feature>
<feature type="topological domain" description="Extracellular" evidence="2">
    <location>
        <begin position="1"/>
        <end position="7"/>
    </location>
</feature>
<feature type="transmembrane region" description="Helical; Name=1" evidence="2">
    <location>
        <begin position="8"/>
        <end position="28"/>
    </location>
</feature>
<feature type="topological domain" description="Cytoplasmic" evidence="2">
    <location>
        <begin position="29"/>
        <end position="43"/>
    </location>
</feature>
<feature type="transmembrane region" description="Helical; Name=2" evidence="2">
    <location>
        <begin position="44"/>
        <end position="64"/>
    </location>
</feature>
<feature type="topological domain" description="Extracellular" evidence="2">
    <location>
        <begin position="65"/>
        <end position="94"/>
    </location>
</feature>
<feature type="transmembrane region" description="Helical; Name=3" evidence="2">
    <location>
        <begin position="95"/>
        <end position="115"/>
    </location>
</feature>
<feature type="topological domain" description="Cytoplasmic" evidence="2">
    <location>
        <begin position="116"/>
        <end position="127"/>
    </location>
</feature>
<feature type="transmembrane region" description="Helical; Name=4" evidence="2">
    <location>
        <begin position="128"/>
        <end position="148"/>
    </location>
</feature>
<feature type="topological domain" description="Extracellular" evidence="2">
    <location>
        <begin position="149"/>
        <end position="180"/>
    </location>
</feature>
<feature type="transmembrane region" description="Helical; Name=5" evidence="2">
    <location>
        <begin position="181"/>
        <end position="201"/>
    </location>
</feature>
<feature type="topological domain" description="Cytoplasmic" evidence="2">
    <location>
        <begin position="202"/>
        <end position="232"/>
    </location>
</feature>
<feature type="transmembrane region" description="Helical; Name=6" evidence="2">
    <location>
        <begin position="233"/>
        <end position="253"/>
    </location>
</feature>
<feature type="topological domain" description="Extracellular" evidence="2">
    <location>
        <begin position="254"/>
        <end position="258"/>
    </location>
</feature>
<feature type="transmembrane region" description="Helical; Name=7" evidence="2">
    <location>
        <begin position="259"/>
        <end position="279"/>
    </location>
</feature>
<feature type="topological domain" description="Cytoplasmic" evidence="2">
    <location>
        <begin position="280"/>
        <end position="308"/>
    </location>
</feature>
<feature type="glycosylation site" description="N-linked (GlcNAc...) asparagine" evidence="2">
    <location>
        <position position="80"/>
    </location>
</feature>
<feature type="glycosylation site" description="N-linked (GlcNAc...) asparagine" evidence="2">
    <location>
        <position position="153"/>
    </location>
</feature>
<feature type="glycosylation site" description="N-linked (GlcNAc...) asparagine" evidence="2">
    <location>
        <position position="161"/>
    </location>
</feature>
<feature type="glycosylation site" description="N-linked (GlcNAc...) asparagine" evidence="2">
    <location>
        <position position="175"/>
    </location>
</feature>